<name>CHL1_DEBHA</name>
<keyword id="KW-0067">ATP-binding</keyword>
<keyword id="KW-0131">Cell cycle</keyword>
<keyword id="KW-0238">DNA-binding</keyword>
<keyword id="KW-0347">Helicase</keyword>
<keyword id="KW-0378">Hydrolase</keyword>
<keyword id="KW-0408">Iron</keyword>
<keyword id="KW-0411">Iron-sulfur</keyword>
<keyword id="KW-0413">Isomerase</keyword>
<keyword id="KW-0479">Metal-binding</keyword>
<keyword id="KW-0547">Nucleotide-binding</keyword>
<keyword id="KW-0539">Nucleus</keyword>
<keyword id="KW-1185">Reference proteome</keyword>
<keyword id="KW-0677">Repeat</keyword>
<protein>
    <recommendedName>
        <fullName evidence="2">ATP-dependent DNA helicase CHL1</fullName>
        <ecNumber evidence="3">5.6.2.3</ecNumber>
    </recommendedName>
    <alternativeName>
        <fullName evidence="2">Chromosome loss protein 1</fullName>
    </alternativeName>
    <alternativeName>
        <fullName evidence="5">DNA 5'-3' helicase CHL1</fullName>
    </alternativeName>
</protein>
<proteinExistence type="inferred from homology"/>
<dbReference type="EC" id="5.6.2.3" evidence="3"/>
<dbReference type="EMBL" id="CR382133">
    <property type="protein sequence ID" value="CAG84382.2"/>
    <property type="molecule type" value="Genomic_DNA"/>
</dbReference>
<dbReference type="RefSeq" id="XP_456430.2">
    <property type="nucleotide sequence ID" value="XM_456430.1"/>
</dbReference>
<dbReference type="SMR" id="Q6BZD9"/>
<dbReference type="FunCoup" id="Q6BZD9">
    <property type="interactions" value="1017"/>
</dbReference>
<dbReference type="STRING" id="284592.Q6BZD9"/>
<dbReference type="GeneID" id="2899632"/>
<dbReference type="KEGG" id="dha:DEHA2A02112g"/>
<dbReference type="VEuPathDB" id="FungiDB:DEHA2A02112g"/>
<dbReference type="eggNOG" id="KOG1133">
    <property type="taxonomic scope" value="Eukaryota"/>
</dbReference>
<dbReference type="HOGENOM" id="CLU_006515_2_0_1"/>
<dbReference type="InParanoid" id="Q6BZD9"/>
<dbReference type="OMA" id="QTHQFRD"/>
<dbReference type="OrthoDB" id="267079at2759"/>
<dbReference type="Proteomes" id="UP000000599">
    <property type="component" value="Chromosome A"/>
</dbReference>
<dbReference type="GO" id="GO:0000785">
    <property type="term" value="C:chromatin"/>
    <property type="evidence" value="ECO:0007669"/>
    <property type="project" value="EnsemblFungi"/>
</dbReference>
<dbReference type="GO" id="GO:0005634">
    <property type="term" value="C:nucleus"/>
    <property type="evidence" value="ECO:0007669"/>
    <property type="project" value="UniProtKB-SubCell"/>
</dbReference>
<dbReference type="GO" id="GO:0005524">
    <property type="term" value="F:ATP binding"/>
    <property type="evidence" value="ECO:0007669"/>
    <property type="project" value="UniProtKB-KW"/>
</dbReference>
<dbReference type="GO" id="GO:0016887">
    <property type="term" value="F:ATP hydrolysis activity"/>
    <property type="evidence" value="ECO:0007669"/>
    <property type="project" value="RHEA"/>
</dbReference>
<dbReference type="GO" id="GO:0003677">
    <property type="term" value="F:DNA binding"/>
    <property type="evidence" value="ECO:0007669"/>
    <property type="project" value="UniProtKB-KW"/>
</dbReference>
<dbReference type="GO" id="GO:0003678">
    <property type="term" value="F:DNA helicase activity"/>
    <property type="evidence" value="ECO:0007669"/>
    <property type="project" value="EnsemblFungi"/>
</dbReference>
<dbReference type="GO" id="GO:0051536">
    <property type="term" value="F:iron-sulfur cluster binding"/>
    <property type="evidence" value="ECO:0007669"/>
    <property type="project" value="UniProtKB-KW"/>
</dbReference>
<dbReference type="GO" id="GO:0046872">
    <property type="term" value="F:metal ion binding"/>
    <property type="evidence" value="ECO:0007669"/>
    <property type="project" value="UniProtKB-KW"/>
</dbReference>
<dbReference type="GO" id="GO:0034085">
    <property type="term" value="P:establishment of sister chromatid cohesion"/>
    <property type="evidence" value="ECO:0007669"/>
    <property type="project" value="EnsemblFungi"/>
</dbReference>
<dbReference type="GO" id="GO:0036297">
    <property type="term" value="P:interstrand cross-link repair"/>
    <property type="evidence" value="ECO:0007669"/>
    <property type="project" value="EnsemblFungi"/>
</dbReference>
<dbReference type="GO" id="GO:0031571">
    <property type="term" value="P:mitotic G1 DNA damage checkpoint signaling"/>
    <property type="evidence" value="ECO:0007669"/>
    <property type="project" value="EnsemblFungi"/>
</dbReference>
<dbReference type="GO" id="GO:0007064">
    <property type="term" value="P:mitotic sister chromatid cohesion"/>
    <property type="evidence" value="ECO:0007669"/>
    <property type="project" value="EnsemblFungi"/>
</dbReference>
<dbReference type="CDD" id="cd18788">
    <property type="entry name" value="SF2_C_XPD"/>
    <property type="match status" value="1"/>
</dbReference>
<dbReference type="FunFam" id="3.40.50.300:FF:001372">
    <property type="entry name" value="ATP-dependent DNA helicase chl1"/>
    <property type="match status" value="1"/>
</dbReference>
<dbReference type="Gene3D" id="3.40.50.300">
    <property type="entry name" value="P-loop containing nucleotide triphosphate hydrolases"/>
    <property type="match status" value="3"/>
</dbReference>
<dbReference type="InterPro" id="IPR006555">
    <property type="entry name" value="ATP-dep_Helicase_C"/>
</dbReference>
<dbReference type="InterPro" id="IPR045028">
    <property type="entry name" value="DinG/Rad3-like"/>
</dbReference>
<dbReference type="InterPro" id="IPR002464">
    <property type="entry name" value="DNA/RNA_helicase_DEAH_CS"/>
</dbReference>
<dbReference type="InterPro" id="IPR014013">
    <property type="entry name" value="Helic_SF1/SF2_ATP-bd_DinG/Rad3"/>
</dbReference>
<dbReference type="InterPro" id="IPR006554">
    <property type="entry name" value="Helicase-like_DEXD_c2"/>
</dbReference>
<dbReference type="InterPro" id="IPR014001">
    <property type="entry name" value="Helicase_ATP-bd"/>
</dbReference>
<dbReference type="InterPro" id="IPR027417">
    <property type="entry name" value="P-loop_NTPase"/>
</dbReference>
<dbReference type="InterPro" id="IPR010614">
    <property type="entry name" value="RAD3-like_helicase_DEAD"/>
</dbReference>
<dbReference type="InterPro" id="IPR013020">
    <property type="entry name" value="Rad3/Chl1-like"/>
</dbReference>
<dbReference type="NCBIfam" id="TIGR00604">
    <property type="entry name" value="rad3"/>
    <property type="match status" value="1"/>
</dbReference>
<dbReference type="PANTHER" id="PTHR11472:SF41">
    <property type="entry name" value="ATP-DEPENDENT DNA HELICASE DDX11-RELATED"/>
    <property type="match status" value="1"/>
</dbReference>
<dbReference type="PANTHER" id="PTHR11472">
    <property type="entry name" value="DNA REPAIR DEAD HELICASE RAD3/XP-D SUBFAMILY MEMBER"/>
    <property type="match status" value="1"/>
</dbReference>
<dbReference type="Pfam" id="PF06733">
    <property type="entry name" value="DEAD_2"/>
    <property type="match status" value="1"/>
</dbReference>
<dbReference type="Pfam" id="PF13307">
    <property type="entry name" value="Helicase_C_2"/>
    <property type="match status" value="1"/>
</dbReference>
<dbReference type="SMART" id="SM00487">
    <property type="entry name" value="DEXDc"/>
    <property type="match status" value="1"/>
</dbReference>
<dbReference type="SMART" id="SM00488">
    <property type="entry name" value="DEXDc2"/>
    <property type="match status" value="1"/>
</dbReference>
<dbReference type="SMART" id="SM00491">
    <property type="entry name" value="HELICc2"/>
    <property type="match status" value="1"/>
</dbReference>
<dbReference type="SUPFAM" id="SSF52540">
    <property type="entry name" value="P-loop containing nucleoside triphosphate hydrolases"/>
    <property type="match status" value="1"/>
</dbReference>
<dbReference type="PROSITE" id="PS00690">
    <property type="entry name" value="DEAH_ATP_HELICASE"/>
    <property type="match status" value="1"/>
</dbReference>
<dbReference type="PROSITE" id="PS51193">
    <property type="entry name" value="HELICASE_ATP_BIND_2"/>
    <property type="match status" value="1"/>
</dbReference>
<accession>Q6BZD9</accession>
<sequence length="820" mass="94146">MGNLEANDVGNNSRKYNHPFEPYDIQIQLMDAIYDAIDNYKIGLFESPTGTGKTLSLICSSMTWLREYKKNSTFRETEDSESEDEPEWVKQAYQKTIANRTKVRAQEYERLLDDLSENYDVSKVSVLPEKKVKRQKPEQEQDENFIPADYYSDSELDSKYENDKLTSEINELLSRVDGPKETVEPVNDCPVKIFFSSRTHSQLSQFSHQLNMTEFESSLDNIPERIKFSPLASRKQLCIHPKISKLSNVSSINDACIDLQQSSKNSCEYIPKLHNTQSEEIVKKFSDLSFTKIHDIEDLGKLGNKLKICPYYSVRKGIDVTEIIALPYQMLLQDSTRSALNLNIDDSIIIIDEAHNLLDVISSIYSVSITSNELSDITKSLKFYLNKFIKRLNSGNRINIMKLIKLCQVLEKFISSNSKDGKIKHGDEIITSDIFEGTTGDLVNIHKIEQFLNKSKIAYKIESYMQKLNDSESIKNRSNPLLFKITKFLKCLTNPSKEGKFFWDKTNDSVSINYMLLDPSEIFRDIVKRARCVLLCGGTMEPMNDYTNYLFPYIPPEQIKKFSCGHIIPQENLEVFPIGNYNDISFEFSFDKRNNSKMIIELGHAILNIIESTPDGIVIFFPSYKYLNVVMNVWRQNKIIESLTKVKAIFQEPEDSSKVEKVLNDYSSTNKSEKHSALLLSVVGGKMSEGINFSDELARGVIMIGLPFPNIFSAELIAKRKFIEESTIAKGGTKSQAMVNAKNFYENICMRAVNQSIGRSIRHKNDYSIIYLFDQRYGSDKIQDKLSGWVKQKLFTRGRCTDFNQVIKETQDFFRQKLLG</sequence>
<feature type="chain" id="PRO_0000351009" description="ATP-dependent DNA helicase CHL1">
    <location>
        <begin position="1"/>
        <end position="820"/>
    </location>
</feature>
<feature type="domain" description="Helicase ATP-binding" evidence="4">
    <location>
        <begin position="12"/>
        <end position="410"/>
    </location>
</feature>
<feature type="short sequence motif" description="DEAH box">
    <location>
        <begin position="352"/>
        <end position="355"/>
    </location>
</feature>
<feature type="binding site" evidence="4">
    <location>
        <begin position="47"/>
        <end position="54"/>
    </location>
    <ligand>
        <name>ATP</name>
        <dbReference type="ChEBI" id="CHEBI:30616"/>
    </ligand>
</feature>
<feature type="binding site" evidence="1">
    <location>
        <position position="238"/>
    </location>
    <ligand>
        <name>[4Fe-4S] cluster</name>
        <dbReference type="ChEBI" id="CHEBI:49883"/>
    </ligand>
</feature>
<feature type="binding site" evidence="1">
    <location>
        <position position="256"/>
    </location>
    <ligand>
        <name>[4Fe-4S] cluster</name>
        <dbReference type="ChEBI" id="CHEBI:49883"/>
    </ligand>
</feature>
<feature type="binding site" evidence="1">
    <location>
        <position position="267"/>
    </location>
    <ligand>
        <name>[4Fe-4S] cluster</name>
        <dbReference type="ChEBI" id="CHEBI:49883"/>
    </ligand>
</feature>
<feature type="binding site" evidence="1">
    <location>
        <position position="309"/>
    </location>
    <ligand>
        <name>[4Fe-4S] cluster</name>
        <dbReference type="ChEBI" id="CHEBI:49883"/>
    </ligand>
</feature>
<organism>
    <name type="scientific">Debaryomyces hansenii (strain ATCC 36239 / CBS 767 / BCRC 21394 / JCM 1990 / NBRC 0083 / IGC 2968)</name>
    <name type="common">Yeast</name>
    <name type="synonym">Torulaspora hansenii</name>
    <dbReference type="NCBI Taxonomy" id="284592"/>
    <lineage>
        <taxon>Eukaryota</taxon>
        <taxon>Fungi</taxon>
        <taxon>Dikarya</taxon>
        <taxon>Ascomycota</taxon>
        <taxon>Saccharomycotina</taxon>
        <taxon>Pichiomycetes</taxon>
        <taxon>Debaryomycetaceae</taxon>
        <taxon>Debaryomyces</taxon>
    </lineage>
</organism>
<evidence type="ECO:0000250" key="1">
    <source>
        <dbReference type="UniProtKB" id="P18074"/>
    </source>
</evidence>
<evidence type="ECO:0000250" key="2">
    <source>
        <dbReference type="UniProtKB" id="P22516"/>
    </source>
</evidence>
<evidence type="ECO:0000250" key="3">
    <source>
        <dbReference type="UniProtKB" id="Q96FC9"/>
    </source>
</evidence>
<evidence type="ECO:0000255" key="4">
    <source>
        <dbReference type="PROSITE-ProRule" id="PRU00541"/>
    </source>
</evidence>
<evidence type="ECO:0000305" key="5"/>
<reference key="1">
    <citation type="journal article" date="2004" name="Nature">
        <title>Genome evolution in yeasts.</title>
        <authorList>
            <person name="Dujon B."/>
            <person name="Sherman D."/>
            <person name="Fischer G."/>
            <person name="Durrens P."/>
            <person name="Casaregola S."/>
            <person name="Lafontaine I."/>
            <person name="de Montigny J."/>
            <person name="Marck C."/>
            <person name="Neuveglise C."/>
            <person name="Talla E."/>
            <person name="Goffard N."/>
            <person name="Frangeul L."/>
            <person name="Aigle M."/>
            <person name="Anthouard V."/>
            <person name="Babour A."/>
            <person name="Barbe V."/>
            <person name="Barnay S."/>
            <person name="Blanchin S."/>
            <person name="Beckerich J.-M."/>
            <person name="Beyne E."/>
            <person name="Bleykasten C."/>
            <person name="Boisrame A."/>
            <person name="Boyer J."/>
            <person name="Cattolico L."/>
            <person name="Confanioleri F."/>
            <person name="de Daruvar A."/>
            <person name="Despons L."/>
            <person name="Fabre E."/>
            <person name="Fairhead C."/>
            <person name="Ferry-Dumazet H."/>
            <person name="Groppi A."/>
            <person name="Hantraye F."/>
            <person name="Hennequin C."/>
            <person name="Jauniaux N."/>
            <person name="Joyet P."/>
            <person name="Kachouri R."/>
            <person name="Kerrest A."/>
            <person name="Koszul R."/>
            <person name="Lemaire M."/>
            <person name="Lesur I."/>
            <person name="Ma L."/>
            <person name="Muller H."/>
            <person name="Nicaud J.-M."/>
            <person name="Nikolski M."/>
            <person name="Oztas S."/>
            <person name="Ozier-Kalogeropoulos O."/>
            <person name="Pellenz S."/>
            <person name="Potier S."/>
            <person name="Richard G.-F."/>
            <person name="Straub M.-L."/>
            <person name="Suleau A."/>
            <person name="Swennen D."/>
            <person name="Tekaia F."/>
            <person name="Wesolowski-Louvel M."/>
            <person name="Westhof E."/>
            <person name="Wirth B."/>
            <person name="Zeniou-Meyer M."/>
            <person name="Zivanovic Y."/>
            <person name="Bolotin-Fukuhara M."/>
            <person name="Thierry A."/>
            <person name="Bouchier C."/>
            <person name="Caudron B."/>
            <person name="Scarpelli C."/>
            <person name="Gaillardin C."/>
            <person name="Weissenbach J."/>
            <person name="Wincker P."/>
            <person name="Souciet J.-L."/>
        </authorList>
    </citation>
    <scope>NUCLEOTIDE SEQUENCE [LARGE SCALE GENOMIC DNA]</scope>
    <source>
        <strain>ATCC 36239 / CBS 767 / BCRC 21394 / JCM 1990 / NBRC 0083 / IGC 2968</strain>
    </source>
</reference>
<gene>
    <name type="primary">CHL1</name>
    <name type="ordered locus">DEHA2A02112g</name>
</gene>
<comment type="function">
    <text evidence="2">ATP-dependent DNA helicase important for chromosome transmission and normal cell cycle progression in G(2)/M (By similarity). May have a role in changing DNA topology to allow the loading of proteins involved in maintaining sister chromatid cohesion in the vicinity of the centromeres (By similarity). Has a specific role in chromosome segregation during meiosis II (By similarity).</text>
</comment>
<comment type="catalytic activity">
    <reaction evidence="3">
        <text>Couples ATP hydrolysis with the unwinding of duplex DNA at the replication fork by translocating in the 5'-3' direction. This creates two antiparallel DNA single strands (ssDNA). The leading ssDNA polymer is the template for DNA polymerase III holoenzyme which synthesizes a continuous strand.</text>
        <dbReference type="EC" id="5.6.2.3"/>
    </reaction>
</comment>
<comment type="catalytic activity">
    <reaction evidence="3">
        <text>ATP + H2O = ADP + phosphate + H(+)</text>
        <dbReference type="Rhea" id="RHEA:13065"/>
        <dbReference type="ChEBI" id="CHEBI:15377"/>
        <dbReference type="ChEBI" id="CHEBI:15378"/>
        <dbReference type="ChEBI" id="CHEBI:30616"/>
        <dbReference type="ChEBI" id="CHEBI:43474"/>
        <dbReference type="ChEBI" id="CHEBI:456216"/>
        <dbReference type="EC" id="5.6.2.3"/>
    </reaction>
</comment>
<comment type="cofactor">
    <cofactor evidence="1">
        <name>[4Fe-4S] cluster</name>
        <dbReference type="ChEBI" id="CHEBI:49883"/>
    </cofactor>
    <text evidence="1">Binds 1 [4Fe-4S] cluster.</text>
</comment>
<comment type="subcellular location">
    <subcellularLocation>
        <location evidence="2">Nucleus</location>
    </subcellularLocation>
</comment>
<comment type="similarity">
    <text evidence="5">Belongs to the DEAD box helicase family. DEAH subfamily. DDX11/CHL1 sub-subfamily.</text>
</comment>